<sequence length="241" mass="26535">MAFGPAAMGYDRAITIFSPDGSLYQVDYAFEAVKKGWTAIGIKSKSGVVIASEKRKAQSLLDVDSIEKVFLIDDHVGCSFAGLASDGRVLIDYARNIALQHRLIYDEPVSIDYLTKSVADVKQMYTQHGGVRPFGVALVIAGIDKSVPKLYMTEPSGQYMPYQAVAIGQGYYTATEFLEKNYKEDLTIEDTILLALKALSATLKPNEKLTPNTVEIGYASTQTGLFLKMTSEDKNMYLQKL</sequence>
<name>PSA_SACI2</name>
<comment type="function">
    <text evidence="1">Component of the proteasome core, a large protease complex with broad specificity involved in protein degradation.</text>
</comment>
<comment type="activity regulation">
    <text evidence="1">The formation of the proteasomal ATPase PAN-20S proteasome complex, via the docking of the C-termini of PAN into the intersubunit pockets in the alpha-rings, triggers opening of the gate for substrate entry. Interconversion between the open-gate and close-gate conformations leads to a dynamic regulation of the 20S proteasome proteolysis activity.</text>
</comment>
<comment type="subunit">
    <text evidence="1">The 20S proteasome core is composed of 14 alpha and 14 beta subunits that assemble into four stacked heptameric rings, resulting in a barrel-shaped structure. The two inner rings, each composed of seven catalytic beta subunits, are sandwiched by two outer rings, each composed of seven alpha subunits. The catalytic chamber with the active sites is on the inside of the barrel. Has a gated structure, the ends of the cylinder being occluded by the N-termini of the alpha-subunits. Is capped at one or both ends by the proteasome regulatory ATPase, PAN.</text>
</comment>
<comment type="subcellular location">
    <subcellularLocation>
        <location evidence="1">Cytoplasm</location>
    </subcellularLocation>
</comment>
<comment type="similarity">
    <text evidence="1">Belongs to the peptidase T1A family.</text>
</comment>
<protein>
    <recommendedName>
        <fullName evidence="1">Proteasome subunit alpha</fullName>
    </recommendedName>
    <alternativeName>
        <fullName evidence="1">20S proteasome alpha subunit</fullName>
    </alternativeName>
    <alternativeName>
        <fullName evidence="1">Proteasome core protein PsmA</fullName>
    </alternativeName>
</protein>
<proteinExistence type="inferred from homology"/>
<organism>
    <name type="scientific">Saccharolobus islandicus (strain L.S.2.15 / Lassen #1)</name>
    <name type="common">Sulfolobus islandicus</name>
    <dbReference type="NCBI Taxonomy" id="429572"/>
    <lineage>
        <taxon>Archaea</taxon>
        <taxon>Thermoproteota</taxon>
        <taxon>Thermoprotei</taxon>
        <taxon>Sulfolobales</taxon>
        <taxon>Sulfolobaceae</taxon>
        <taxon>Saccharolobus</taxon>
    </lineage>
</organism>
<accession>C3MQ43</accession>
<keyword id="KW-0963">Cytoplasm</keyword>
<keyword id="KW-0647">Proteasome</keyword>
<gene>
    <name evidence="1" type="primary">psmA</name>
    <name type="ordered locus">LS215_1498</name>
</gene>
<dbReference type="EMBL" id="CP001399">
    <property type="protein sequence ID" value="ACP35506.1"/>
    <property type="molecule type" value="Genomic_DNA"/>
</dbReference>
<dbReference type="RefSeq" id="WP_012711401.1">
    <property type="nucleotide sequence ID" value="NC_012589.1"/>
</dbReference>
<dbReference type="SMR" id="C3MQ43"/>
<dbReference type="GeneID" id="84061723"/>
<dbReference type="KEGG" id="sis:LS215_1498"/>
<dbReference type="HOGENOM" id="CLU_035750_4_1_2"/>
<dbReference type="OrthoDB" id="9421at2157"/>
<dbReference type="Proteomes" id="UP000001747">
    <property type="component" value="Chromosome"/>
</dbReference>
<dbReference type="GO" id="GO:0005737">
    <property type="term" value="C:cytoplasm"/>
    <property type="evidence" value="ECO:0007669"/>
    <property type="project" value="UniProtKB-SubCell"/>
</dbReference>
<dbReference type="GO" id="GO:0019773">
    <property type="term" value="C:proteasome core complex, alpha-subunit complex"/>
    <property type="evidence" value="ECO:0000250"/>
    <property type="project" value="UniProtKB"/>
</dbReference>
<dbReference type="GO" id="GO:0004298">
    <property type="term" value="F:threonine-type endopeptidase activity"/>
    <property type="evidence" value="ECO:0007669"/>
    <property type="project" value="InterPro"/>
</dbReference>
<dbReference type="GO" id="GO:0010498">
    <property type="term" value="P:proteasomal protein catabolic process"/>
    <property type="evidence" value="ECO:0007669"/>
    <property type="project" value="UniProtKB-UniRule"/>
</dbReference>
<dbReference type="GO" id="GO:0006511">
    <property type="term" value="P:ubiquitin-dependent protein catabolic process"/>
    <property type="evidence" value="ECO:0007669"/>
    <property type="project" value="InterPro"/>
</dbReference>
<dbReference type="CDD" id="cd03756">
    <property type="entry name" value="proteasome_alpha_archeal"/>
    <property type="match status" value="1"/>
</dbReference>
<dbReference type="FunFam" id="3.60.20.10:FF:000004">
    <property type="entry name" value="Proteasome subunit alpha type-4"/>
    <property type="match status" value="1"/>
</dbReference>
<dbReference type="Gene3D" id="3.60.20.10">
    <property type="entry name" value="Glutamine Phosphoribosylpyrophosphate, subunit 1, domain 1"/>
    <property type="match status" value="1"/>
</dbReference>
<dbReference type="HAMAP" id="MF_00289_A">
    <property type="entry name" value="Proteasome_A_A"/>
    <property type="match status" value="1"/>
</dbReference>
<dbReference type="InterPro" id="IPR029055">
    <property type="entry name" value="Ntn_hydrolases_N"/>
</dbReference>
<dbReference type="InterPro" id="IPR050115">
    <property type="entry name" value="Proteasome_alpha"/>
</dbReference>
<dbReference type="InterPro" id="IPR023332">
    <property type="entry name" value="Proteasome_alpha-type"/>
</dbReference>
<dbReference type="InterPro" id="IPR019982">
    <property type="entry name" value="Proteasome_asu_arc"/>
</dbReference>
<dbReference type="InterPro" id="IPR000426">
    <property type="entry name" value="Proteasome_asu_N"/>
</dbReference>
<dbReference type="InterPro" id="IPR001353">
    <property type="entry name" value="Proteasome_sua/b"/>
</dbReference>
<dbReference type="NCBIfam" id="TIGR03633">
    <property type="entry name" value="arc_protsome_A"/>
    <property type="match status" value="1"/>
</dbReference>
<dbReference type="NCBIfam" id="NF003075">
    <property type="entry name" value="PRK03996.1"/>
    <property type="match status" value="1"/>
</dbReference>
<dbReference type="PANTHER" id="PTHR11599">
    <property type="entry name" value="PROTEASOME SUBUNIT ALPHA/BETA"/>
    <property type="match status" value="1"/>
</dbReference>
<dbReference type="Pfam" id="PF00227">
    <property type="entry name" value="Proteasome"/>
    <property type="match status" value="1"/>
</dbReference>
<dbReference type="Pfam" id="PF10584">
    <property type="entry name" value="Proteasome_A_N"/>
    <property type="match status" value="1"/>
</dbReference>
<dbReference type="SMART" id="SM00948">
    <property type="entry name" value="Proteasome_A_N"/>
    <property type="match status" value="1"/>
</dbReference>
<dbReference type="SUPFAM" id="SSF56235">
    <property type="entry name" value="N-terminal nucleophile aminohydrolases (Ntn hydrolases)"/>
    <property type="match status" value="1"/>
</dbReference>
<dbReference type="PROSITE" id="PS00388">
    <property type="entry name" value="PROTEASOME_ALPHA_1"/>
    <property type="match status" value="1"/>
</dbReference>
<dbReference type="PROSITE" id="PS51475">
    <property type="entry name" value="PROTEASOME_ALPHA_2"/>
    <property type="match status" value="1"/>
</dbReference>
<evidence type="ECO:0000255" key="1">
    <source>
        <dbReference type="HAMAP-Rule" id="MF_00289"/>
    </source>
</evidence>
<reference key="1">
    <citation type="journal article" date="2009" name="Proc. Natl. Acad. Sci. U.S.A.">
        <title>Biogeography of the Sulfolobus islandicus pan-genome.</title>
        <authorList>
            <person name="Reno M.L."/>
            <person name="Held N.L."/>
            <person name="Fields C.J."/>
            <person name="Burke P.V."/>
            <person name="Whitaker R.J."/>
        </authorList>
    </citation>
    <scope>NUCLEOTIDE SEQUENCE [LARGE SCALE GENOMIC DNA]</scope>
    <source>
        <strain>L.S.2.15 / Lassen #1</strain>
    </source>
</reference>
<feature type="chain" id="PRO_1000204861" description="Proteasome subunit alpha">
    <location>
        <begin position="1"/>
        <end position="241"/>
    </location>
</feature>